<feature type="peptide" id="PRO_0000421596" description="Pyrokinin-3" evidence="3">
    <location>
        <begin position="1"/>
        <end position="8"/>
    </location>
</feature>
<feature type="modified residue" description="Leucine amide" evidence="3">
    <location>
        <position position="8"/>
    </location>
</feature>
<sequence>DPPFSPRL</sequence>
<protein>
    <recommendedName>
        <fullName evidence="4">Pyrokinin-3</fullName>
        <shortName evidence="4">PK-3</shortName>
    </recommendedName>
    <alternativeName>
        <fullName evidence="1">FXPRL-amide</fullName>
    </alternativeName>
</protein>
<name>PPK3_KARBO</name>
<organism>
    <name type="scientific">Karoophasma botterkloofense</name>
    <name type="common">Gladiator</name>
    <name type="synonym">Heel-walker</name>
    <dbReference type="NCBI Taxonomy" id="253132"/>
    <lineage>
        <taxon>Eukaryota</taxon>
        <taxon>Metazoa</taxon>
        <taxon>Ecdysozoa</taxon>
        <taxon>Arthropoda</taxon>
        <taxon>Hexapoda</taxon>
        <taxon>Insecta</taxon>
        <taxon>Pterygota</taxon>
        <taxon>Neoptera</taxon>
        <taxon>Polyneoptera</taxon>
        <taxon>Mantophasmatodea</taxon>
        <taxon>Austrophasmatidae</taxon>
        <taxon>Karoophasma</taxon>
    </lineage>
</organism>
<proteinExistence type="evidence at protein level"/>
<evidence type="ECO:0000250" key="1">
    <source>
        <dbReference type="UniProtKB" id="P82619"/>
    </source>
</evidence>
<evidence type="ECO:0000255" key="2"/>
<evidence type="ECO:0000269" key="3">
    <source>
    </source>
</evidence>
<evidence type="ECO:0000303" key="4">
    <source>
    </source>
</evidence>
<evidence type="ECO:0000305" key="5"/>
<evidence type="ECO:0000305" key="6">
    <source>
    </source>
</evidence>
<accession>B3A055</accession>
<comment type="function">
    <text evidence="1">Myoactive.</text>
</comment>
<comment type="subcellular location">
    <subcellularLocation>
        <location evidence="6">Secreted</location>
    </subcellularLocation>
</comment>
<comment type="similarity">
    <text evidence="2">Belongs to the pyrokinin family.</text>
</comment>
<reference evidence="5" key="1">
    <citation type="journal article" date="2012" name="Syst. Biol.">
        <title>Peptidomics-based phylogeny and biogeography of Mantophasmatodea (Hexapoda).</title>
        <authorList>
            <person name="Predel R."/>
            <person name="Neupert S."/>
            <person name="Huetteroth W."/>
            <person name="Kahnt J."/>
            <person name="Waidelich D."/>
            <person name="Roth S."/>
        </authorList>
    </citation>
    <scope>PROTEIN SEQUENCE</scope>
    <scope>AMIDATION AT LEU-8</scope>
    <source>
        <tissue evidence="3">Corpora cardiaca</tissue>
    </source>
</reference>
<keyword id="KW-0027">Amidation</keyword>
<keyword id="KW-0903">Direct protein sequencing</keyword>
<keyword id="KW-0527">Neuropeptide</keyword>
<keyword id="KW-0964">Secreted</keyword>
<dbReference type="GO" id="GO:0005576">
    <property type="term" value="C:extracellular region"/>
    <property type="evidence" value="ECO:0007669"/>
    <property type="project" value="UniProtKB-SubCell"/>
</dbReference>
<dbReference type="GO" id="GO:0007218">
    <property type="term" value="P:neuropeptide signaling pathway"/>
    <property type="evidence" value="ECO:0007669"/>
    <property type="project" value="UniProtKB-KW"/>
</dbReference>
<dbReference type="PROSITE" id="PS00539">
    <property type="entry name" value="PYROKININ"/>
    <property type="match status" value="1"/>
</dbReference>